<keyword id="KW-0687">Ribonucleoprotein</keyword>
<keyword id="KW-0689">Ribosomal protein</keyword>
<proteinExistence type="inferred from homology"/>
<reference key="1">
    <citation type="journal article" date="2003" name="Mol. Microbiol.">
        <title>Genome-based analysis of virulence genes in a non-biofilm-forming Staphylococcus epidermidis strain (ATCC 12228).</title>
        <authorList>
            <person name="Zhang Y.-Q."/>
            <person name="Ren S.-X."/>
            <person name="Li H.-L."/>
            <person name="Wang Y.-X."/>
            <person name="Fu G."/>
            <person name="Yang J."/>
            <person name="Qin Z.-Q."/>
            <person name="Miao Y.-G."/>
            <person name="Wang W.-Y."/>
            <person name="Chen R.-S."/>
            <person name="Shen Y."/>
            <person name="Chen Z."/>
            <person name="Yuan Z.-H."/>
            <person name="Zhao G.-P."/>
            <person name="Qu D."/>
            <person name="Danchin A."/>
            <person name="Wen Y.-M."/>
        </authorList>
    </citation>
    <scope>NUCLEOTIDE SEQUENCE [LARGE SCALE GENOMIC DNA]</scope>
    <source>
        <strain>ATCC 12228 / FDA PCI 1200</strain>
    </source>
</reference>
<protein>
    <recommendedName>
        <fullName evidence="1">Large ribosomal subunit protein uL30</fullName>
    </recommendedName>
    <alternativeName>
        <fullName evidence="2">50S ribosomal protein L30</fullName>
    </alternativeName>
</protein>
<feature type="chain" id="PRO_0000104612" description="Large ribosomal subunit protein uL30">
    <location>
        <begin position="1"/>
        <end position="59"/>
    </location>
</feature>
<accession>Q8CRH8</accession>
<comment type="subunit">
    <text evidence="1">Part of the 50S ribosomal subunit.</text>
</comment>
<comment type="similarity">
    <text evidence="1">Belongs to the universal ribosomal protein uL30 family.</text>
</comment>
<dbReference type="EMBL" id="AE015929">
    <property type="protein sequence ID" value="AAO05446.1"/>
    <property type="molecule type" value="Genomic_DNA"/>
</dbReference>
<dbReference type="PIR" id="JP0046">
    <property type="entry name" value="JP0046"/>
</dbReference>
<dbReference type="RefSeq" id="NP_765360.1">
    <property type="nucleotide sequence ID" value="NC_004461.1"/>
</dbReference>
<dbReference type="RefSeq" id="WP_002432330.1">
    <property type="nucleotide sequence ID" value="NZ_WBME01000007.1"/>
</dbReference>
<dbReference type="SMR" id="Q8CRH8"/>
<dbReference type="GeneID" id="93668866"/>
<dbReference type="KEGG" id="sep:SE_1805"/>
<dbReference type="PATRIC" id="fig|176280.10.peg.1762"/>
<dbReference type="eggNOG" id="COG1841">
    <property type="taxonomic scope" value="Bacteria"/>
</dbReference>
<dbReference type="HOGENOM" id="CLU_131047_2_1_9"/>
<dbReference type="OrthoDB" id="9812790at2"/>
<dbReference type="PRO" id="PR:Q8CRH8"/>
<dbReference type="Proteomes" id="UP000001411">
    <property type="component" value="Chromosome"/>
</dbReference>
<dbReference type="GO" id="GO:0022625">
    <property type="term" value="C:cytosolic large ribosomal subunit"/>
    <property type="evidence" value="ECO:0007669"/>
    <property type="project" value="TreeGrafter"/>
</dbReference>
<dbReference type="GO" id="GO:0003735">
    <property type="term" value="F:structural constituent of ribosome"/>
    <property type="evidence" value="ECO:0007669"/>
    <property type="project" value="InterPro"/>
</dbReference>
<dbReference type="GO" id="GO:0006412">
    <property type="term" value="P:translation"/>
    <property type="evidence" value="ECO:0007669"/>
    <property type="project" value="UniProtKB-UniRule"/>
</dbReference>
<dbReference type="CDD" id="cd01658">
    <property type="entry name" value="Ribosomal_L30"/>
    <property type="match status" value="1"/>
</dbReference>
<dbReference type="FunFam" id="3.30.1390.20:FF:000001">
    <property type="entry name" value="50S ribosomal protein L30"/>
    <property type="match status" value="1"/>
</dbReference>
<dbReference type="Gene3D" id="3.30.1390.20">
    <property type="entry name" value="Ribosomal protein L30, ferredoxin-like fold domain"/>
    <property type="match status" value="1"/>
</dbReference>
<dbReference type="HAMAP" id="MF_01371_B">
    <property type="entry name" value="Ribosomal_uL30_B"/>
    <property type="match status" value="1"/>
</dbReference>
<dbReference type="InterPro" id="IPR036919">
    <property type="entry name" value="Ribo_uL30_ferredoxin-like_sf"/>
</dbReference>
<dbReference type="InterPro" id="IPR005996">
    <property type="entry name" value="Ribosomal_uL30_bac-type"/>
</dbReference>
<dbReference type="InterPro" id="IPR016082">
    <property type="entry name" value="Ribosomal_uL30_ferredoxin-like"/>
</dbReference>
<dbReference type="NCBIfam" id="TIGR01308">
    <property type="entry name" value="rpmD_bact"/>
    <property type="match status" value="1"/>
</dbReference>
<dbReference type="PANTHER" id="PTHR15892:SF2">
    <property type="entry name" value="LARGE RIBOSOMAL SUBUNIT PROTEIN UL30M"/>
    <property type="match status" value="1"/>
</dbReference>
<dbReference type="PANTHER" id="PTHR15892">
    <property type="entry name" value="MITOCHONDRIAL RIBOSOMAL PROTEIN L30"/>
    <property type="match status" value="1"/>
</dbReference>
<dbReference type="Pfam" id="PF00327">
    <property type="entry name" value="Ribosomal_L30"/>
    <property type="match status" value="1"/>
</dbReference>
<dbReference type="PIRSF" id="PIRSF002211">
    <property type="entry name" value="Ribosomal_L30_bac-type"/>
    <property type="match status" value="1"/>
</dbReference>
<dbReference type="SUPFAM" id="SSF55129">
    <property type="entry name" value="Ribosomal protein L30p/L7e"/>
    <property type="match status" value="1"/>
</dbReference>
<sequence length="59" mass="6582">MAKLQITLTRSVIGRPETQRKTVEALGLKKTNSSVVVEDNPAIRGQINKVKHLLTIEEK</sequence>
<name>RL30_STAES</name>
<organism>
    <name type="scientific">Staphylococcus epidermidis (strain ATCC 12228 / FDA PCI 1200)</name>
    <dbReference type="NCBI Taxonomy" id="176280"/>
    <lineage>
        <taxon>Bacteria</taxon>
        <taxon>Bacillati</taxon>
        <taxon>Bacillota</taxon>
        <taxon>Bacilli</taxon>
        <taxon>Bacillales</taxon>
        <taxon>Staphylococcaceae</taxon>
        <taxon>Staphylococcus</taxon>
    </lineage>
</organism>
<evidence type="ECO:0000255" key="1">
    <source>
        <dbReference type="HAMAP-Rule" id="MF_01371"/>
    </source>
</evidence>
<evidence type="ECO:0000305" key="2"/>
<gene>
    <name evidence="1" type="primary">rpmD</name>
    <name type="ordered locus">SE_1805</name>
</gene>